<reference key="1">
    <citation type="submission" date="2007-10" db="EMBL/GenBank/DDBJ databases">
        <title>Complete sequence of chromosome of Desulforudis audaxviator MP104C.</title>
        <authorList>
            <person name="Copeland A."/>
            <person name="Lucas S."/>
            <person name="Lapidus A."/>
            <person name="Barry K."/>
            <person name="Glavina del Rio T."/>
            <person name="Dalin E."/>
            <person name="Tice H."/>
            <person name="Bruce D."/>
            <person name="Pitluck S."/>
            <person name="Lowry S.R."/>
            <person name="Larimer F."/>
            <person name="Land M.L."/>
            <person name="Hauser L."/>
            <person name="Kyrpides N."/>
            <person name="Ivanova N.N."/>
            <person name="Richardson P."/>
        </authorList>
    </citation>
    <scope>NUCLEOTIDE SEQUENCE [LARGE SCALE GENOMIC DNA]</scope>
    <source>
        <strain>MP104C</strain>
    </source>
</reference>
<keyword id="KW-0030">Aminoacyl-tRNA synthetase</keyword>
<keyword id="KW-0067">ATP-binding</keyword>
<keyword id="KW-0963">Cytoplasm</keyword>
<keyword id="KW-0436">Ligase</keyword>
<keyword id="KW-0479">Metal-binding</keyword>
<keyword id="KW-0547">Nucleotide-binding</keyword>
<keyword id="KW-0648">Protein biosynthesis</keyword>
<keyword id="KW-1185">Reference proteome</keyword>
<keyword id="KW-0862">Zinc</keyword>
<comment type="function">
    <text evidence="1">Catalyzes the attachment of isoleucine to tRNA(Ile). As IleRS can inadvertently accommodate and process structurally similar amino acids such as valine, to avoid such errors it has two additional distinct tRNA(Ile)-dependent editing activities. One activity is designated as 'pretransfer' editing and involves the hydrolysis of activated Val-AMP. The other activity is designated 'posttransfer' editing and involves deacylation of mischarged Val-tRNA(Ile).</text>
</comment>
<comment type="catalytic activity">
    <reaction evidence="1">
        <text>tRNA(Ile) + L-isoleucine + ATP = L-isoleucyl-tRNA(Ile) + AMP + diphosphate</text>
        <dbReference type="Rhea" id="RHEA:11060"/>
        <dbReference type="Rhea" id="RHEA-COMP:9666"/>
        <dbReference type="Rhea" id="RHEA-COMP:9695"/>
        <dbReference type="ChEBI" id="CHEBI:30616"/>
        <dbReference type="ChEBI" id="CHEBI:33019"/>
        <dbReference type="ChEBI" id="CHEBI:58045"/>
        <dbReference type="ChEBI" id="CHEBI:78442"/>
        <dbReference type="ChEBI" id="CHEBI:78528"/>
        <dbReference type="ChEBI" id="CHEBI:456215"/>
        <dbReference type="EC" id="6.1.1.5"/>
    </reaction>
</comment>
<comment type="cofactor">
    <cofactor evidence="1">
        <name>Zn(2+)</name>
        <dbReference type="ChEBI" id="CHEBI:29105"/>
    </cofactor>
    <text evidence="1">Binds 1 zinc ion per subunit.</text>
</comment>
<comment type="subunit">
    <text evidence="1">Monomer.</text>
</comment>
<comment type="subcellular location">
    <subcellularLocation>
        <location evidence="1">Cytoplasm</location>
    </subcellularLocation>
</comment>
<comment type="domain">
    <text evidence="1">IleRS has two distinct active sites: one for aminoacylation and one for editing. The misactivated valine is translocated from the active site to the editing site, which sterically excludes the correctly activated isoleucine. The single editing site contains two valyl binding pockets, one specific for each substrate (Val-AMP or Val-tRNA(Ile)).</text>
</comment>
<comment type="similarity">
    <text evidence="1">Belongs to the class-I aminoacyl-tRNA synthetase family. IleS type 1 subfamily.</text>
</comment>
<sequence>MDYSKTLNLPTTEFPMRANLPQREPEIGRFWDEIEVYQLVQAKNAGRPKFILHDGPPYANGHIHLGTSLNKILKDIVVKFKSMDGYNAPYVPGWDTHGLPIEQQAIKQLKIKRSALSPVEFRRMCREYALKFVDIQRAEFKRLGVRGEWHNPYLTLQPHFETRQIEVFGEMAKRGYIYKGLKSVYWCADCETALAEAEVEYAEKESPSIHVAFPVVNGRGLLPDQDAAIVIWTTTPWTIPSNVAICVHPEYAYVLLRSGGRAYLVARDLAGNFRELLGDPGAGVEREYRGEELEGVVCRHPFVERDSVVVLADYVTLEQGTGCVHIAPGHGEEDFALGQRYNLPVISPINGKGYFTAEAGNLDGIFYLDANPVVVRELEARGALVGYSRMRHQYPHCWRCKHPVFYRATEQWFASIDGFRRHLLEAIDRVQWIPGWGRDRIRGMVAGRGDWCISRQRVWGVPIPIFYCGDCGRAVITDETISHLKGLFAEHGSDVWYAWEAAELVPPGLVCPHCRGRGDFTKELDTMDVWFDSGSSHWAVLTQPDYWPDLQWPADMYLEGSDQHRGWFNSSLTTAVAVTGEPPYRAVLTHGFVVDEQGRKMSKSLGNVIEPMEVLKELGADILRLWVCSADYRGDLAVSPGILKQMSEAYRKIRNTFRFLLGNLQDFDPDRDTVAYTELTELDRYALLKLHRVTDRVLRAYREYEFHQVYHTLYNYCVTDLSAFYLNVIKDRLYCEPARSVNRRGAQTVLYAVLDSLVRLLVPVLAYTTEEVWGHFPANGKKPPSVQLLEMPEPNPEYLDDELERRWERLLAVRQDVLRALEAARQEKLIRDALEAEAVLYAEPELLEFLRENTVQLPVIFVTSSVRVLPAAEAGGEEAVSGTVAGLKVAVRRAPGTKCVRCWTYGETGVDPEHPEICPRCATVLSGLNL</sequence>
<name>SYI_DESAP</name>
<organism>
    <name type="scientific">Desulforudis audaxviator (strain MP104C)</name>
    <dbReference type="NCBI Taxonomy" id="477974"/>
    <lineage>
        <taxon>Bacteria</taxon>
        <taxon>Bacillati</taxon>
        <taxon>Bacillota</taxon>
        <taxon>Clostridia</taxon>
        <taxon>Thermoanaerobacterales</taxon>
        <taxon>Candidatus Desulforudaceae</taxon>
        <taxon>Candidatus Desulforudis</taxon>
    </lineage>
</organism>
<accession>B1I4A3</accession>
<evidence type="ECO:0000255" key="1">
    <source>
        <dbReference type="HAMAP-Rule" id="MF_02002"/>
    </source>
</evidence>
<protein>
    <recommendedName>
        <fullName evidence="1">Isoleucine--tRNA ligase</fullName>
        <ecNumber evidence="1">6.1.1.5</ecNumber>
    </recommendedName>
    <alternativeName>
        <fullName evidence="1">Isoleucyl-tRNA synthetase</fullName>
        <shortName evidence="1">IleRS</shortName>
    </alternativeName>
</protein>
<feature type="chain" id="PRO_1000189149" description="Isoleucine--tRNA ligase">
    <location>
        <begin position="1"/>
        <end position="930"/>
    </location>
</feature>
<feature type="short sequence motif" description="'HIGH' region">
    <location>
        <begin position="57"/>
        <end position="67"/>
    </location>
</feature>
<feature type="short sequence motif" description="'KMSKS' region">
    <location>
        <begin position="600"/>
        <end position="604"/>
    </location>
</feature>
<feature type="binding site" evidence="1">
    <location>
        <position position="559"/>
    </location>
    <ligand>
        <name>L-isoleucyl-5'-AMP</name>
        <dbReference type="ChEBI" id="CHEBI:178002"/>
    </ligand>
</feature>
<feature type="binding site" evidence="1">
    <location>
        <position position="603"/>
    </location>
    <ligand>
        <name>ATP</name>
        <dbReference type="ChEBI" id="CHEBI:30616"/>
    </ligand>
</feature>
<feature type="binding site" evidence="1">
    <location>
        <position position="899"/>
    </location>
    <ligand>
        <name>Zn(2+)</name>
        <dbReference type="ChEBI" id="CHEBI:29105"/>
    </ligand>
</feature>
<feature type="binding site" evidence="1">
    <location>
        <position position="902"/>
    </location>
    <ligand>
        <name>Zn(2+)</name>
        <dbReference type="ChEBI" id="CHEBI:29105"/>
    </ligand>
</feature>
<feature type="binding site" evidence="1">
    <location>
        <position position="918"/>
    </location>
    <ligand>
        <name>Zn(2+)</name>
        <dbReference type="ChEBI" id="CHEBI:29105"/>
    </ligand>
</feature>
<feature type="binding site" evidence="1">
    <location>
        <position position="921"/>
    </location>
    <ligand>
        <name>Zn(2+)</name>
        <dbReference type="ChEBI" id="CHEBI:29105"/>
    </ligand>
</feature>
<dbReference type="EC" id="6.1.1.5" evidence="1"/>
<dbReference type="EMBL" id="CP000860">
    <property type="protein sequence ID" value="ACA59917.1"/>
    <property type="molecule type" value="Genomic_DNA"/>
</dbReference>
<dbReference type="RefSeq" id="WP_012302502.1">
    <property type="nucleotide sequence ID" value="NC_010424.1"/>
</dbReference>
<dbReference type="SMR" id="B1I4A3"/>
<dbReference type="STRING" id="477974.Daud_1408"/>
<dbReference type="KEGG" id="dau:Daud_1408"/>
<dbReference type="eggNOG" id="COG0060">
    <property type="taxonomic scope" value="Bacteria"/>
</dbReference>
<dbReference type="HOGENOM" id="CLU_001493_7_0_9"/>
<dbReference type="OrthoDB" id="9810365at2"/>
<dbReference type="Proteomes" id="UP000008544">
    <property type="component" value="Chromosome"/>
</dbReference>
<dbReference type="GO" id="GO:0005829">
    <property type="term" value="C:cytosol"/>
    <property type="evidence" value="ECO:0007669"/>
    <property type="project" value="TreeGrafter"/>
</dbReference>
<dbReference type="GO" id="GO:0002161">
    <property type="term" value="F:aminoacyl-tRNA deacylase activity"/>
    <property type="evidence" value="ECO:0007669"/>
    <property type="project" value="InterPro"/>
</dbReference>
<dbReference type="GO" id="GO:0005524">
    <property type="term" value="F:ATP binding"/>
    <property type="evidence" value="ECO:0007669"/>
    <property type="project" value="UniProtKB-UniRule"/>
</dbReference>
<dbReference type="GO" id="GO:0004822">
    <property type="term" value="F:isoleucine-tRNA ligase activity"/>
    <property type="evidence" value="ECO:0007669"/>
    <property type="project" value="UniProtKB-UniRule"/>
</dbReference>
<dbReference type="GO" id="GO:0000049">
    <property type="term" value="F:tRNA binding"/>
    <property type="evidence" value="ECO:0007669"/>
    <property type="project" value="InterPro"/>
</dbReference>
<dbReference type="GO" id="GO:0008270">
    <property type="term" value="F:zinc ion binding"/>
    <property type="evidence" value="ECO:0007669"/>
    <property type="project" value="UniProtKB-UniRule"/>
</dbReference>
<dbReference type="GO" id="GO:0006428">
    <property type="term" value="P:isoleucyl-tRNA aminoacylation"/>
    <property type="evidence" value="ECO:0007669"/>
    <property type="project" value="UniProtKB-UniRule"/>
</dbReference>
<dbReference type="CDD" id="cd07960">
    <property type="entry name" value="Anticodon_Ia_Ile_BEm"/>
    <property type="match status" value="1"/>
</dbReference>
<dbReference type="CDD" id="cd00818">
    <property type="entry name" value="IleRS_core"/>
    <property type="match status" value="1"/>
</dbReference>
<dbReference type="FunFam" id="1.10.730.20:FF:000001">
    <property type="entry name" value="Isoleucine--tRNA ligase"/>
    <property type="match status" value="1"/>
</dbReference>
<dbReference type="FunFam" id="3.40.50.620:FF:000152">
    <property type="entry name" value="Isoleucine--tRNA ligase"/>
    <property type="match status" value="1"/>
</dbReference>
<dbReference type="Gene3D" id="1.10.730.20">
    <property type="match status" value="1"/>
</dbReference>
<dbReference type="Gene3D" id="3.40.50.620">
    <property type="entry name" value="HUPs"/>
    <property type="match status" value="2"/>
</dbReference>
<dbReference type="Gene3D" id="1.10.10.830">
    <property type="entry name" value="Ile-tRNA synthetase CP2 domain-like"/>
    <property type="match status" value="1"/>
</dbReference>
<dbReference type="Gene3D" id="3.90.740.10">
    <property type="entry name" value="Valyl/Leucyl/Isoleucyl-tRNA synthetase, editing domain"/>
    <property type="match status" value="1"/>
</dbReference>
<dbReference type="HAMAP" id="MF_02002">
    <property type="entry name" value="Ile_tRNA_synth_type1"/>
    <property type="match status" value="1"/>
</dbReference>
<dbReference type="InterPro" id="IPR001412">
    <property type="entry name" value="aa-tRNA-synth_I_CS"/>
</dbReference>
<dbReference type="InterPro" id="IPR002300">
    <property type="entry name" value="aa-tRNA-synth_Ia"/>
</dbReference>
<dbReference type="InterPro" id="IPR033708">
    <property type="entry name" value="Anticodon_Ile_BEm"/>
</dbReference>
<dbReference type="InterPro" id="IPR002301">
    <property type="entry name" value="Ile-tRNA-ligase"/>
</dbReference>
<dbReference type="InterPro" id="IPR023585">
    <property type="entry name" value="Ile-tRNA-ligase_type1"/>
</dbReference>
<dbReference type="InterPro" id="IPR050081">
    <property type="entry name" value="Ile-tRNA_ligase"/>
</dbReference>
<dbReference type="InterPro" id="IPR013155">
    <property type="entry name" value="M/V/L/I-tRNA-synth_anticd-bd"/>
</dbReference>
<dbReference type="InterPro" id="IPR014729">
    <property type="entry name" value="Rossmann-like_a/b/a_fold"/>
</dbReference>
<dbReference type="InterPro" id="IPR009080">
    <property type="entry name" value="tRNAsynth_Ia_anticodon-bd"/>
</dbReference>
<dbReference type="InterPro" id="IPR009008">
    <property type="entry name" value="Val/Leu/Ile-tRNA-synth_edit"/>
</dbReference>
<dbReference type="InterPro" id="IPR010663">
    <property type="entry name" value="Znf_FPG/IleRS"/>
</dbReference>
<dbReference type="NCBIfam" id="TIGR00392">
    <property type="entry name" value="ileS"/>
    <property type="match status" value="1"/>
</dbReference>
<dbReference type="PANTHER" id="PTHR42765:SF1">
    <property type="entry name" value="ISOLEUCINE--TRNA LIGASE, MITOCHONDRIAL"/>
    <property type="match status" value="1"/>
</dbReference>
<dbReference type="PANTHER" id="PTHR42765">
    <property type="entry name" value="SOLEUCYL-TRNA SYNTHETASE"/>
    <property type="match status" value="1"/>
</dbReference>
<dbReference type="Pfam" id="PF08264">
    <property type="entry name" value="Anticodon_1"/>
    <property type="match status" value="1"/>
</dbReference>
<dbReference type="Pfam" id="PF00133">
    <property type="entry name" value="tRNA-synt_1"/>
    <property type="match status" value="1"/>
</dbReference>
<dbReference type="Pfam" id="PF06827">
    <property type="entry name" value="zf-FPG_IleRS"/>
    <property type="match status" value="1"/>
</dbReference>
<dbReference type="PRINTS" id="PR00984">
    <property type="entry name" value="TRNASYNTHILE"/>
</dbReference>
<dbReference type="SUPFAM" id="SSF47323">
    <property type="entry name" value="Anticodon-binding domain of a subclass of class I aminoacyl-tRNA synthetases"/>
    <property type="match status" value="1"/>
</dbReference>
<dbReference type="SUPFAM" id="SSF52374">
    <property type="entry name" value="Nucleotidylyl transferase"/>
    <property type="match status" value="1"/>
</dbReference>
<dbReference type="SUPFAM" id="SSF50677">
    <property type="entry name" value="ValRS/IleRS/LeuRS editing domain"/>
    <property type="match status" value="1"/>
</dbReference>
<dbReference type="PROSITE" id="PS00178">
    <property type="entry name" value="AA_TRNA_LIGASE_I"/>
    <property type="match status" value="1"/>
</dbReference>
<gene>
    <name evidence="1" type="primary">ileS</name>
    <name type="ordered locus">Daud_1408</name>
</gene>
<proteinExistence type="inferred from homology"/>